<reference key="1">
    <citation type="journal article" date="2005" name="Nucleic Acids Res.">
        <title>Genome dynamics and diversity of Shigella species, the etiologic agents of bacillary dysentery.</title>
        <authorList>
            <person name="Yang F."/>
            <person name="Yang J."/>
            <person name="Zhang X."/>
            <person name="Chen L."/>
            <person name="Jiang Y."/>
            <person name="Yan Y."/>
            <person name="Tang X."/>
            <person name="Wang J."/>
            <person name="Xiong Z."/>
            <person name="Dong J."/>
            <person name="Xue Y."/>
            <person name="Zhu Y."/>
            <person name="Xu X."/>
            <person name="Sun L."/>
            <person name="Chen S."/>
            <person name="Nie H."/>
            <person name="Peng J."/>
            <person name="Xu J."/>
            <person name="Wang Y."/>
            <person name="Yuan Z."/>
            <person name="Wen Y."/>
            <person name="Yao Z."/>
            <person name="Shen Y."/>
            <person name="Qiang B."/>
            <person name="Hou Y."/>
            <person name="Yu J."/>
            <person name="Jin Q."/>
        </authorList>
    </citation>
    <scope>NUCLEOTIDE SEQUENCE [LARGE SCALE GENOMIC DNA]</scope>
    <source>
        <strain>Ss046</strain>
    </source>
</reference>
<sequence length="317" mass="33515">MYTKIIGTGSYLPEQVRTNADLEKMVDTSDEWIVTRTGIRERHIAAPNETVSTMGFEAATRAIEMAGIEKDQIGLIVVATTSATHAFPSAACQIQSMLGIKGCPAFDVAAACAGFTYALSVADQYVKSGAVKYALVVGSDVLARTCDPTDRGTIIIFGDGAGAAVLAASEEPGIISTHLHADGSYGELLTLPNADRVNPENSIHLTMAGNEVFKVAVTELAHIVDETLAANNLDRSQLDWLVPHQANLRIISATAKKLGMSMDNVVVTLDRHGNTSAASVPCALDEAVRDGRIKPGQLVLLEAFGGGFTWGSALVRF</sequence>
<accession>Q3Z326</accession>
<feature type="chain" id="PRO_1000056409" description="Beta-ketoacyl-[acyl-carrier-protein] synthase III">
    <location>
        <begin position="1"/>
        <end position="317"/>
    </location>
</feature>
<feature type="region of interest" description="ACP-binding" evidence="1">
    <location>
        <begin position="245"/>
        <end position="249"/>
    </location>
</feature>
<feature type="active site" evidence="1">
    <location>
        <position position="112"/>
    </location>
</feature>
<feature type="active site" evidence="1">
    <location>
        <position position="244"/>
    </location>
</feature>
<feature type="active site" evidence="1">
    <location>
        <position position="274"/>
    </location>
</feature>
<evidence type="ECO:0000255" key="1">
    <source>
        <dbReference type="HAMAP-Rule" id="MF_01815"/>
    </source>
</evidence>
<organism>
    <name type="scientific">Shigella sonnei (strain Ss046)</name>
    <dbReference type="NCBI Taxonomy" id="300269"/>
    <lineage>
        <taxon>Bacteria</taxon>
        <taxon>Pseudomonadati</taxon>
        <taxon>Pseudomonadota</taxon>
        <taxon>Gammaproteobacteria</taxon>
        <taxon>Enterobacterales</taxon>
        <taxon>Enterobacteriaceae</taxon>
        <taxon>Shigella</taxon>
    </lineage>
</organism>
<gene>
    <name evidence="1" type="primary">fabH</name>
    <name type="ordered locus">SSON_1111</name>
</gene>
<protein>
    <recommendedName>
        <fullName evidence="1">Beta-ketoacyl-[acyl-carrier-protein] synthase III</fullName>
        <shortName evidence="1">Beta-ketoacyl-ACP synthase III</shortName>
        <shortName evidence="1">KAS III</shortName>
        <ecNumber evidence="1">2.3.1.180</ecNumber>
    </recommendedName>
    <alternativeName>
        <fullName evidence="1">3-oxoacyl-[acyl-carrier-protein] synthase 3</fullName>
    </alternativeName>
    <alternativeName>
        <fullName evidence="1">3-oxoacyl-[acyl-carrier-protein] synthase III</fullName>
    </alternativeName>
</protein>
<name>FABH_SHISS</name>
<proteinExistence type="inferred from homology"/>
<comment type="function">
    <text evidence="1">Catalyzes the condensation reaction of fatty acid synthesis by the addition to an acyl acceptor of two carbons from malonyl-ACP. Catalyzes the first condensation reaction which initiates fatty acid synthesis and may therefore play a role in governing the total rate of fatty acid production. Possesses both acetoacetyl-ACP synthase and acetyl transacylase activities. Its substrate specificity determines the biosynthesis of branched-chain and/or straight-chain of fatty acids.</text>
</comment>
<comment type="catalytic activity">
    <reaction evidence="1">
        <text>malonyl-[ACP] + acetyl-CoA + H(+) = 3-oxobutanoyl-[ACP] + CO2 + CoA</text>
        <dbReference type="Rhea" id="RHEA:12080"/>
        <dbReference type="Rhea" id="RHEA-COMP:9623"/>
        <dbReference type="Rhea" id="RHEA-COMP:9625"/>
        <dbReference type="ChEBI" id="CHEBI:15378"/>
        <dbReference type="ChEBI" id="CHEBI:16526"/>
        <dbReference type="ChEBI" id="CHEBI:57287"/>
        <dbReference type="ChEBI" id="CHEBI:57288"/>
        <dbReference type="ChEBI" id="CHEBI:78449"/>
        <dbReference type="ChEBI" id="CHEBI:78450"/>
        <dbReference type="EC" id="2.3.1.180"/>
    </reaction>
</comment>
<comment type="pathway">
    <text evidence="1">Lipid metabolism; fatty acid biosynthesis.</text>
</comment>
<comment type="subunit">
    <text evidence="1">Homodimer.</text>
</comment>
<comment type="subcellular location">
    <subcellularLocation>
        <location evidence="1">Cytoplasm</location>
    </subcellularLocation>
</comment>
<comment type="domain">
    <text evidence="1">The last Arg residue of the ACP-binding site is essential for the weak association between ACP/AcpP and FabH.</text>
</comment>
<comment type="similarity">
    <text evidence="1">Belongs to the thiolase-like superfamily. FabH family.</text>
</comment>
<dbReference type="EC" id="2.3.1.180" evidence="1"/>
<dbReference type="EMBL" id="CP000038">
    <property type="protein sequence ID" value="AAZ87836.1"/>
    <property type="molecule type" value="Genomic_DNA"/>
</dbReference>
<dbReference type="RefSeq" id="WP_000288132.1">
    <property type="nucleotide sequence ID" value="NC_007384.1"/>
</dbReference>
<dbReference type="SMR" id="Q3Z326"/>
<dbReference type="GeneID" id="93776317"/>
<dbReference type="KEGG" id="ssn:SSON_1111"/>
<dbReference type="HOGENOM" id="CLU_039592_4_1_6"/>
<dbReference type="UniPathway" id="UPA00094"/>
<dbReference type="Proteomes" id="UP000002529">
    <property type="component" value="Chromosome"/>
</dbReference>
<dbReference type="GO" id="GO:0005737">
    <property type="term" value="C:cytoplasm"/>
    <property type="evidence" value="ECO:0007669"/>
    <property type="project" value="UniProtKB-SubCell"/>
</dbReference>
<dbReference type="GO" id="GO:0004315">
    <property type="term" value="F:3-oxoacyl-[acyl-carrier-protein] synthase activity"/>
    <property type="evidence" value="ECO:0007669"/>
    <property type="project" value="InterPro"/>
</dbReference>
<dbReference type="GO" id="GO:0033818">
    <property type="term" value="F:beta-ketoacyl-acyl-carrier-protein synthase III activity"/>
    <property type="evidence" value="ECO:0007669"/>
    <property type="project" value="UniProtKB-UniRule"/>
</dbReference>
<dbReference type="GO" id="GO:0006633">
    <property type="term" value="P:fatty acid biosynthetic process"/>
    <property type="evidence" value="ECO:0007669"/>
    <property type="project" value="UniProtKB-UniRule"/>
</dbReference>
<dbReference type="CDD" id="cd00830">
    <property type="entry name" value="KAS_III"/>
    <property type="match status" value="1"/>
</dbReference>
<dbReference type="FunFam" id="3.40.47.10:FF:000004">
    <property type="entry name" value="3-oxoacyl-[acyl-carrier-protein] synthase 3"/>
    <property type="match status" value="1"/>
</dbReference>
<dbReference type="Gene3D" id="3.40.47.10">
    <property type="match status" value="1"/>
</dbReference>
<dbReference type="HAMAP" id="MF_01815">
    <property type="entry name" value="FabH"/>
    <property type="match status" value="1"/>
</dbReference>
<dbReference type="InterPro" id="IPR013747">
    <property type="entry name" value="ACP_syn_III_C"/>
</dbReference>
<dbReference type="InterPro" id="IPR013751">
    <property type="entry name" value="ACP_syn_III_N"/>
</dbReference>
<dbReference type="InterPro" id="IPR004655">
    <property type="entry name" value="FabH"/>
</dbReference>
<dbReference type="InterPro" id="IPR016039">
    <property type="entry name" value="Thiolase-like"/>
</dbReference>
<dbReference type="NCBIfam" id="TIGR00747">
    <property type="entry name" value="fabH"/>
    <property type="match status" value="1"/>
</dbReference>
<dbReference type="NCBIfam" id="NF006829">
    <property type="entry name" value="PRK09352.1"/>
    <property type="match status" value="1"/>
</dbReference>
<dbReference type="PANTHER" id="PTHR43091">
    <property type="entry name" value="3-OXOACYL-[ACYL-CARRIER-PROTEIN] SYNTHASE"/>
    <property type="match status" value="1"/>
</dbReference>
<dbReference type="PANTHER" id="PTHR43091:SF1">
    <property type="entry name" value="BETA-KETOACYL-[ACYL-CARRIER-PROTEIN] SYNTHASE III, CHLOROPLASTIC"/>
    <property type="match status" value="1"/>
</dbReference>
<dbReference type="Pfam" id="PF08545">
    <property type="entry name" value="ACP_syn_III"/>
    <property type="match status" value="1"/>
</dbReference>
<dbReference type="Pfam" id="PF08541">
    <property type="entry name" value="ACP_syn_III_C"/>
    <property type="match status" value="1"/>
</dbReference>
<dbReference type="SUPFAM" id="SSF53901">
    <property type="entry name" value="Thiolase-like"/>
    <property type="match status" value="1"/>
</dbReference>
<keyword id="KW-0012">Acyltransferase</keyword>
<keyword id="KW-0963">Cytoplasm</keyword>
<keyword id="KW-0275">Fatty acid biosynthesis</keyword>
<keyword id="KW-0276">Fatty acid metabolism</keyword>
<keyword id="KW-0444">Lipid biosynthesis</keyword>
<keyword id="KW-0443">Lipid metabolism</keyword>
<keyword id="KW-0511">Multifunctional enzyme</keyword>
<keyword id="KW-1185">Reference proteome</keyword>
<keyword id="KW-0808">Transferase</keyword>